<protein>
    <recommendedName>
        <fullName evidence="1">Large ribosomal subunit protein bL28</fullName>
    </recommendedName>
    <alternativeName>
        <fullName evidence="2">50S ribosomal protein L28</fullName>
    </alternativeName>
</protein>
<evidence type="ECO:0000255" key="1">
    <source>
        <dbReference type="HAMAP-Rule" id="MF_00373"/>
    </source>
</evidence>
<evidence type="ECO:0000305" key="2"/>
<sequence length="78" mass="9006">MSRVCQVTGKRPVTGNNRSHALNATKRRFLPNLHSHRFWVESEKRFVTLRVSAKGMRVIDKKGIDTVLAELRARGEKY</sequence>
<proteinExistence type="inferred from homology"/>
<dbReference type="EMBL" id="CU928158">
    <property type="protein sequence ID" value="CAQ91362.1"/>
    <property type="molecule type" value="Genomic_DNA"/>
</dbReference>
<dbReference type="RefSeq" id="WP_000091955.1">
    <property type="nucleotide sequence ID" value="NC_011740.1"/>
</dbReference>
<dbReference type="SMR" id="B7LVJ8"/>
<dbReference type="GeneID" id="93778350"/>
<dbReference type="KEGG" id="efe:EFER_3928"/>
<dbReference type="HOGENOM" id="CLU_064548_3_1_6"/>
<dbReference type="OrthoDB" id="9805609at2"/>
<dbReference type="Proteomes" id="UP000000745">
    <property type="component" value="Chromosome"/>
</dbReference>
<dbReference type="GO" id="GO:0022625">
    <property type="term" value="C:cytosolic large ribosomal subunit"/>
    <property type="evidence" value="ECO:0007669"/>
    <property type="project" value="TreeGrafter"/>
</dbReference>
<dbReference type="GO" id="GO:0003735">
    <property type="term" value="F:structural constituent of ribosome"/>
    <property type="evidence" value="ECO:0007669"/>
    <property type="project" value="InterPro"/>
</dbReference>
<dbReference type="GO" id="GO:0006412">
    <property type="term" value="P:translation"/>
    <property type="evidence" value="ECO:0007669"/>
    <property type="project" value="UniProtKB-UniRule"/>
</dbReference>
<dbReference type="FunFam" id="2.30.170.40:FF:000001">
    <property type="entry name" value="50S ribosomal protein L28"/>
    <property type="match status" value="1"/>
</dbReference>
<dbReference type="Gene3D" id="2.30.170.40">
    <property type="entry name" value="Ribosomal protein L28/L24"/>
    <property type="match status" value="1"/>
</dbReference>
<dbReference type="HAMAP" id="MF_00373">
    <property type="entry name" value="Ribosomal_bL28"/>
    <property type="match status" value="1"/>
</dbReference>
<dbReference type="InterPro" id="IPR026569">
    <property type="entry name" value="Ribosomal_bL28"/>
</dbReference>
<dbReference type="InterPro" id="IPR034704">
    <property type="entry name" value="Ribosomal_bL28/bL31-like_sf"/>
</dbReference>
<dbReference type="InterPro" id="IPR001383">
    <property type="entry name" value="Ribosomal_bL28_bact-type"/>
</dbReference>
<dbReference type="InterPro" id="IPR037147">
    <property type="entry name" value="Ribosomal_bL28_sf"/>
</dbReference>
<dbReference type="NCBIfam" id="TIGR00009">
    <property type="entry name" value="L28"/>
    <property type="match status" value="1"/>
</dbReference>
<dbReference type="PANTHER" id="PTHR13528">
    <property type="entry name" value="39S RIBOSOMAL PROTEIN L28, MITOCHONDRIAL"/>
    <property type="match status" value="1"/>
</dbReference>
<dbReference type="PANTHER" id="PTHR13528:SF2">
    <property type="entry name" value="LARGE RIBOSOMAL SUBUNIT PROTEIN BL28M"/>
    <property type="match status" value="1"/>
</dbReference>
<dbReference type="Pfam" id="PF00830">
    <property type="entry name" value="Ribosomal_L28"/>
    <property type="match status" value="1"/>
</dbReference>
<dbReference type="SUPFAM" id="SSF143800">
    <property type="entry name" value="L28p-like"/>
    <property type="match status" value="1"/>
</dbReference>
<organism>
    <name type="scientific">Escherichia fergusonii (strain ATCC 35469 / DSM 13698 / CCUG 18766 / IAM 14443 / JCM 21226 / LMG 7866 / NBRC 102419 / NCTC 12128 / CDC 0568-73)</name>
    <dbReference type="NCBI Taxonomy" id="585054"/>
    <lineage>
        <taxon>Bacteria</taxon>
        <taxon>Pseudomonadati</taxon>
        <taxon>Pseudomonadota</taxon>
        <taxon>Gammaproteobacteria</taxon>
        <taxon>Enterobacterales</taxon>
        <taxon>Enterobacteriaceae</taxon>
        <taxon>Escherichia</taxon>
    </lineage>
</organism>
<name>RL28_ESCF3</name>
<keyword id="KW-0687">Ribonucleoprotein</keyword>
<keyword id="KW-0689">Ribosomal protein</keyword>
<accession>B7LVJ8</accession>
<reference key="1">
    <citation type="journal article" date="2009" name="PLoS Genet.">
        <title>Organised genome dynamics in the Escherichia coli species results in highly diverse adaptive paths.</title>
        <authorList>
            <person name="Touchon M."/>
            <person name="Hoede C."/>
            <person name="Tenaillon O."/>
            <person name="Barbe V."/>
            <person name="Baeriswyl S."/>
            <person name="Bidet P."/>
            <person name="Bingen E."/>
            <person name="Bonacorsi S."/>
            <person name="Bouchier C."/>
            <person name="Bouvet O."/>
            <person name="Calteau A."/>
            <person name="Chiapello H."/>
            <person name="Clermont O."/>
            <person name="Cruveiller S."/>
            <person name="Danchin A."/>
            <person name="Diard M."/>
            <person name="Dossat C."/>
            <person name="Karoui M.E."/>
            <person name="Frapy E."/>
            <person name="Garry L."/>
            <person name="Ghigo J.M."/>
            <person name="Gilles A.M."/>
            <person name="Johnson J."/>
            <person name="Le Bouguenec C."/>
            <person name="Lescat M."/>
            <person name="Mangenot S."/>
            <person name="Martinez-Jehanne V."/>
            <person name="Matic I."/>
            <person name="Nassif X."/>
            <person name="Oztas S."/>
            <person name="Petit M.A."/>
            <person name="Pichon C."/>
            <person name="Rouy Z."/>
            <person name="Ruf C.S."/>
            <person name="Schneider D."/>
            <person name="Tourret J."/>
            <person name="Vacherie B."/>
            <person name="Vallenet D."/>
            <person name="Medigue C."/>
            <person name="Rocha E.P.C."/>
            <person name="Denamur E."/>
        </authorList>
    </citation>
    <scope>NUCLEOTIDE SEQUENCE [LARGE SCALE GENOMIC DNA]</scope>
    <source>
        <strain>ATCC 35469 / DSM 13698 / BCRC 15582 / CCUG 18766 / IAM 14443 / JCM 21226 / LMG 7866 / NBRC 102419 / NCTC 12128 / CDC 0568-73</strain>
    </source>
</reference>
<gene>
    <name evidence="1" type="primary">rpmB</name>
    <name type="ordered locus">EFER_3928</name>
</gene>
<feature type="chain" id="PRO_1000121635" description="Large ribosomal subunit protein bL28">
    <location>
        <begin position="1"/>
        <end position="78"/>
    </location>
</feature>
<comment type="similarity">
    <text evidence="1">Belongs to the bacterial ribosomal protein bL28 family.</text>
</comment>